<accession>Q2RCG9</accession>
<proteinExistence type="inferred from homology"/>
<feature type="chain" id="PRO_0000279255" description="Polymerase acidic protein">
    <location>
        <begin position="1"/>
        <end position="716"/>
    </location>
</feature>
<feature type="short sequence motif" description="Nuclear localization signal 1 (NLS1)" evidence="1 2">
    <location>
        <begin position="124"/>
        <end position="139"/>
    </location>
</feature>
<feature type="short sequence motif" description="Nuclear localization signal 2 (NLS2)" evidence="1 2">
    <location>
        <begin position="184"/>
        <end position="247"/>
    </location>
</feature>
<feature type="binding site" evidence="2">
    <location>
        <position position="41"/>
    </location>
    <ligand>
        <name>Mn(2+)</name>
        <dbReference type="ChEBI" id="CHEBI:29035"/>
        <label>1</label>
    </ligand>
</feature>
<feature type="binding site" evidence="2">
    <location>
        <position position="80"/>
    </location>
    <ligand>
        <name>Mn(2+)</name>
        <dbReference type="ChEBI" id="CHEBI:29035"/>
        <label>2</label>
    </ligand>
</feature>
<feature type="binding site" evidence="2">
    <location>
        <position position="108"/>
    </location>
    <ligand>
        <name>Mn(2+)</name>
        <dbReference type="ChEBI" id="CHEBI:29035"/>
        <label>1</label>
    </ligand>
</feature>
<feature type="binding site" evidence="2">
    <location>
        <position position="108"/>
    </location>
    <ligand>
        <name>Mn(2+)</name>
        <dbReference type="ChEBI" id="CHEBI:29035"/>
        <label>2</label>
    </ligand>
</feature>
<feature type="binding site" evidence="2">
    <location>
        <position position="119"/>
    </location>
    <ligand>
        <name>Mn(2+)</name>
        <dbReference type="ChEBI" id="CHEBI:29035"/>
        <label>1</label>
    </ligand>
</feature>
<feature type="binding site" evidence="2">
    <location>
        <position position="120"/>
    </location>
    <ligand>
        <name>Mn(2+)</name>
        <dbReference type="ChEBI" id="CHEBI:29035"/>
        <label>1</label>
    </ligand>
</feature>
<organismHost>
    <name type="scientific">Aves</name>
    <dbReference type="NCBI Taxonomy" id="8782"/>
</organismHost>
<organismHost>
    <name type="scientific">Cetacea</name>
    <name type="common">whales</name>
    <dbReference type="NCBI Taxonomy" id="9721"/>
</organismHost>
<organismHost>
    <name type="scientific">Homo sapiens</name>
    <name type="common">Human</name>
    <dbReference type="NCBI Taxonomy" id="9606"/>
</organismHost>
<organismHost>
    <name type="scientific">Phocidae</name>
    <name type="common">true seals</name>
    <dbReference type="NCBI Taxonomy" id="9709"/>
</organismHost>
<organismHost>
    <name type="scientific">Sus scrofa</name>
    <name type="common">Pig</name>
    <dbReference type="NCBI Taxonomy" id="9823"/>
</organismHost>
<gene>
    <name evidence="2" type="primary">PA</name>
</gene>
<sequence length="716" mass="82824">MEDFVRQCFNPMIVELAEKAMKEYGEDLKIETNKFAAICTHLEVCFMYSDFHFINEQGESIVVELDDPNALLKHRFEIIEGRDRTMAWTVVNSICNTTGAEKPKFLPDLYDYKENRFIEIGVTRREVHIYYLEKANKIKSENTHIHIFSFTGEEMATKADYTLDEESRARIKTRLFTIRQEMANRGLWDSFRQSERGEETIEEKFEITGTMRRLADQSLPPNFSCLENFRAYVDGFEPNGCIEGKLSQMSKEVNAKIEPFLKTTPRPIKLPDGPPCFQRSKFLLMDALKLSIEDPSHEGEGIPLYDAIKCMRTFFGWKEPYIVKPHEKGINSNYLLSWKQVLAELQDIENEEKIPRTKNMKKTSQLKWALGENMAPEKVDFDNCRDISDLKQYDSDEPELRSLSSWIQNEFNKACELTDSIWIELDEIGEDVAPIEYIASMRRNYFTAEVSHCRATEYIMKGVYINTALLNASCAAMDDFQLIPMISKCRTKEGRRKTNLYGFIIKGRSHLRNDTDVVNFVSMEFSLTDPRLEPHKWEKYCVLEIGDMLLRSAIGQMSRPMFLYVRTNGTSKIKMKWGMEMRRCLLQSLQQIESMIEAESSVKEKDMTKEFFENKSETWPIGESPNGVEEGSIGKVCRTLLAKSVFNSLYASPQLEGFSAESRKLLLVVQALRDNLEPGTFDLGGLYEAIEECLINDPWVLLNASWFNSFLTHALR</sequence>
<reference key="1">
    <citation type="submission" date="2005-12" db="EMBL/GenBank/DDBJ databases">
        <title>The NIAID influenza genome sequencing project.</title>
        <authorList>
            <person name="Ghedin E."/>
            <person name="Spiro D."/>
            <person name="Miller N."/>
            <person name="Zaborsky J."/>
            <person name="Feldblyum T."/>
            <person name="Subbu V."/>
            <person name="Shumway M."/>
            <person name="Sparenborg J."/>
            <person name="Groveman L."/>
            <person name="Halpin R."/>
            <person name="Sitz J."/>
            <person name="Koo H."/>
            <person name="Salzberg S.L."/>
            <person name="Webster R.G."/>
            <person name="Hoffmann E."/>
            <person name="Krauss S."/>
            <person name="Naeve C."/>
            <person name="Bao Y."/>
            <person name="Bolotov P."/>
            <person name="Dernovoy D."/>
            <person name="Kiryutin B."/>
            <person name="Lipman D.J."/>
            <person name="Tatusova T."/>
        </authorList>
    </citation>
    <scope>NUCLEOTIDE SEQUENCE [GENOMIC RNA]</scope>
</reference>
<organism>
    <name type="scientific">Influenza A virus (strain A/Memphis/4/1980 H3N2)</name>
    <dbReference type="NCBI Taxonomy" id="383578"/>
    <lineage>
        <taxon>Viruses</taxon>
        <taxon>Riboviria</taxon>
        <taxon>Orthornavirae</taxon>
        <taxon>Negarnaviricota</taxon>
        <taxon>Polyploviricotina</taxon>
        <taxon>Insthoviricetes</taxon>
        <taxon>Articulavirales</taxon>
        <taxon>Orthomyxoviridae</taxon>
        <taxon>Alphainfluenzavirus</taxon>
        <taxon>Alphainfluenzavirus influenzae</taxon>
        <taxon>Influenza A virus</taxon>
    </lineage>
</organism>
<evidence type="ECO:0000250" key="1">
    <source>
        <dbReference type="UniProtKB" id="P03433"/>
    </source>
</evidence>
<evidence type="ECO:0000255" key="2">
    <source>
        <dbReference type="HAMAP-Rule" id="MF_04063"/>
    </source>
</evidence>
<keyword id="KW-1157">Cap snatching</keyword>
<keyword id="KW-0255">Endonuclease</keyword>
<keyword id="KW-1262">Eukaryotic host gene expression shutoff by virus</keyword>
<keyword id="KW-1191">Eukaryotic host transcription shutoff by virus</keyword>
<keyword id="KW-1035">Host cytoplasm</keyword>
<keyword id="KW-1190">Host gene expression shutoff by virus</keyword>
<keyword id="KW-1048">Host nucleus</keyword>
<keyword id="KW-0945">Host-virus interaction</keyword>
<keyword id="KW-0378">Hydrolase</keyword>
<keyword id="KW-1104">Inhibition of host RNA polymerase II by virus</keyword>
<keyword id="KW-0464">Manganese</keyword>
<keyword id="KW-0479">Metal-binding</keyword>
<keyword id="KW-0540">Nuclease</keyword>
<keyword id="KW-0597">Phosphoprotein</keyword>
<keyword id="KW-0688">Ribosomal frameshifting</keyword>
<dbReference type="EC" id="3.1.-.-" evidence="2"/>
<dbReference type="EMBL" id="CY007624">
    <property type="protein sequence ID" value="ABC46572.1"/>
    <property type="molecule type" value="Genomic_RNA"/>
</dbReference>
<dbReference type="SMR" id="Q2RCG9"/>
<dbReference type="MEROPS" id="S62.001"/>
<dbReference type="Proteomes" id="UP000008577">
    <property type="component" value="Genome"/>
</dbReference>
<dbReference type="GO" id="GO:0030430">
    <property type="term" value="C:host cell cytoplasm"/>
    <property type="evidence" value="ECO:0007669"/>
    <property type="project" value="UniProtKB-SubCell"/>
</dbReference>
<dbReference type="GO" id="GO:0042025">
    <property type="term" value="C:host cell nucleus"/>
    <property type="evidence" value="ECO:0007669"/>
    <property type="project" value="UniProtKB-SubCell"/>
</dbReference>
<dbReference type="GO" id="GO:0004519">
    <property type="term" value="F:endonuclease activity"/>
    <property type="evidence" value="ECO:0007669"/>
    <property type="project" value="UniProtKB-KW"/>
</dbReference>
<dbReference type="GO" id="GO:0046872">
    <property type="term" value="F:metal ion binding"/>
    <property type="evidence" value="ECO:0007669"/>
    <property type="project" value="UniProtKB-KW"/>
</dbReference>
<dbReference type="GO" id="GO:0003723">
    <property type="term" value="F:RNA binding"/>
    <property type="evidence" value="ECO:0007669"/>
    <property type="project" value="UniProtKB-UniRule"/>
</dbReference>
<dbReference type="GO" id="GO:0075526">
    <property type="term" value="P:cap snatching"/>
    <property type="evidence" value="ECO:0007669"/>
    <property type="project" value="UniProtKB-UniRule"/>
</dbReference>
<dbReference type="GO" id="GO:0006351">
    <property type="term" value="P:DNA-templated transcription"/>
    <property type="evidence" value="ECO:0007669"/>
    <property type="project" value="UniProtKB-UniRule"/>
</dbReference>
<dbReference type="GO" id="GO:0039657">
    <property type="term" value="P:symbiont-mediated suppression of host gene expression"/>
    <property type="evidence" value="ECO:0007669"/>
    <property type="project" value="UniProtKB-KW"/>
</dbReference>
<dbReference type="GO" id="GO:0039523">
    <property type="term" value="P:symbiont-mediated suppression of host mRNA transcription via inhibition of RNA polymerase II activity"/>
    <property type="evidence" value="ECO:0007669"/>
    <property type="project" value="UniProtKB-UniRule"/>
</dbReference>
<dbReference type="GO" id="GO:0039694">
    <property type="term" value="P:viral RNA genome replication"/>
    <property type="evidence" value="ECO:0007669"/>
    <property type="project" value="InterPro"/>
</dbReference>
<dbReference type="GO" id="GO:0075523">
    <property type="term" value="P:viral translational frameshifting"/>
    <property type="evidence" value="ECO:0007669"/>
    <property type="project" value="UniProtKB-KW"/>
</dbReference>
<dbReference type="FunFam" id="3.40.91.90:FF:000001">
    <property type="entry name" value="Polymerase acidic protein"/>
    <property type="match status" value="1"/>
</dbReference>
<dbReference type="Gene3D" id="3.40.91.90">
    <property type="entry name" value="Influenza RNA-dependent RNA polymerase subunit PA, endonuclease domain"/>
    <property type="match status" value="1"/>
</dbReference>
<dbReference type="HAMAP" id="MF_04063">
    <property type="entry name" value="INFV_PA"/>
    <property type="match status" value="1"/>
</dbReference>
<dbReference type="InterPro" id="IPR037534">
    <property type="entry name" value="INFV_PA"/>
</dbReference>
<dbReference type="InterPro" id="IPR001009">
    <property type="entry name" value="PA/PA-X"/>
</dbReference>
<dbReference type="InterPro" id="IPR038372">
    <property type="entry name" value="PA/PA-X_sf"/>
</dbReference>
<dbReference type="Pfam" id="PF00603">
    <property type="entry name" value="Flu_PA"/>
    <property type="match status" value="1"/>
</dbReference>
<protein>
    <recommendedName>
        <fullName evidence="2">Polymerase acidic protein</fullName>
        <ecNumber evidence="2">3.1.-.-</ecNumber>
    </recommendedName>
    <alternativeName>
        <fullName evidence="2">RNA-directed RNA polymerase subunit P2</fullName>
    </alternativeName>
</protein>
<comment type="function">
    <text evidence="2">Plays an essential role in viral RNA transcription and replication by forming the heterotrimeric polymerase complex together with PB1 and PB2 subunits. The complex transcribes viral mRNAs by using a unique mechanism called cap-snatching. It consists in the hijacking and cleavage of host capped pre-mRNAs. These short capped RNAs are then used as primers for viral mRNAs. The PB2 subunit is responsible for the binding of the 5' cap of cellular pre-mRNAs which are subsequently cleaved after 10-13 nucleotides by the PA subunit that carries the endonuclease activity.</text>
</comment>
<comment type="cofactor">
    <cofactor evidence="2">
        <name>Mn(2+)</name>
        <dbReference type="ChEBI" id="CHEBI:29035"/>
    </cofactor>
    <text evidence="2">Binds 2 manganese ions per subunit.</text>
</comment>
<comment type="subunit">
    <text evidence="1 2">Influenza RNA polymerase is composed of three subunits: PB1, PB2 and PA. Interacts (via C-terminus) with PB1 (via N-terminus).</text>
</comment>
<comment type="subcellular location">
    <subcellularLocation>
        <location evidence="2">Host cytoplasm</location>
    </subcellularLocation>
    <subcellularLocation>
        <location evidence="2">Host nucleus</location>
    </subcellularLocation>
    <text evidence="1 2">PB1 and PA are transported in the host nucleus as a complex.</text>
</comment>
<comment type="alternative products">
    <event type="ribosomal frameshifting"/>
    <isoform>
        <id>Q2RCG9-1</id>
        <name>PA</name>
        <sequence type="displayed"/>
    </isoform>
    <isoform>
        <id>P0DJT5-1</id>
        <name>PA-X</name>
        <sequence type="external"/>
    </isoform>
</comment>
<comment type="PTM">
    <text evidence="1 2">Phosphorylated on serines and threonines by host kinases, including human casein kinase II.</text>
</comment>
<comment type="similarity">
    <text evidence="2">Belongs to the influenza viruses PA family.</text>
</comment>
<name>PA_I80A4</name>